<proteinExistence type="inferred from homology"/>
<sequence length="503" mass="54797">MEFSVKSGSPEKQRSACIVVGVFEPRRLSPIAEQLDKISDGYISALLRRGELEGKVGQTLLLHHVPNILSERILLIGCGKERELDERQYKQVIQKTINTLNDTGSMEAVCFLTELHVKGRNTYWKVRQAVETAKETLYTFDQLKSNKTEPRRPLRKMVFNVPTRRELTSGERAIQHGLAIASGIKAAKDLGNMPPNICNAAYLASQARQLADAFSTNTVTRVIGEQQMKELGMHAYLAVGHGSQNESLMSVIEYKGNPNKDAKPIVLVGKGLTFDSGGISIKPAEGMDEMKYDMCGAATVYGVMRVVAELQLPLNVVGVLAGCENMPGGRAYRPGDILTTMSGQTVEVLNTDAEGRLVLCDALTYVERFEPELVIDIATLTGACVVALGNHLTGLMSNHNPLAHELIGASEQAGDRAWRLPLGEEYYEQLDSNFADMANIGGRAGGAITAGCFLSRFTRKYSWAHLDIAGTAWRSGKNKGATGRPVALLSQFLLNRAGLNGDD</sequence>
<gene>
    <name evidence="1" type="primary">pepA</name>
    <name type="ordered locus">YPK_3679</name>
</gene>
<evidence type="ECO:0000255" key="1">
    <source>
        <dbReference type="HAMAP-Rule" id="MF_00181"/>
    </source>
</evidence>
<dbReference type="EC" id="3.4.11.1" evidence="1"/>
<dbReference type="EC" id="3.4.11.10" evidence="1"/>
<dbReference type="EMBL" id="CP000950">
    <property type="protein sequence ID" value="ACA69946.1"/>
    <property type="molecule type" value="Genomic_DNA"/>
</dbReference>
<dbReference type="RefSeq" id="WP_002209310.1">
    <property type="nucleotide sequence ID" value="NZ_CP009792.1"/>
</dbReference>
<dbReference type="SMR" id="B1JLS9"/>
<dbReference type="MEROPS" id="M17.003"/>
<dbReference type="GeneID" id="57975268"/>
<dbReference type="KEGG" id="ypy:YPK_3679"/>
<dbReference type="PATRIC" id="fig|502800.11.peg.22"/>
<dbReference type="GO" id="GO:0005737">
    <property type="term" value="C:cytoplasm"/>
    <property type="evidence" value="ECO:0007669"/>
    <property type="project" value="UniProtKB-SubCell"/>
</dbReference>
<dbReference type="GO" id="GO:0030145">
    <property type="term" value="F:manganese ion binding"/>
    <property type="evidence" value="ECO:0007669"/>
    <property type="project" value="UniProtKB-UniRule"/>
</dbReference>
<dbReference type="GO" id="GO:0070006">
    <property type="term" value="F:metalloaminopeptidase activity"/>
    <property type="evidence" value="ECO:0007669"/>
    <property type="project" value="InterPro"/>
</dbReference>
<dbReference type="GO" id="GO:0006508">
    <property type="term" value="P:proteolysis"/>
    <property type="evidence" value="ECO:0007669"/>
    <property type="project" value="UniProtKB-KW"/>
</dbReference>
<dbReference type="CDD" id="cd00433">
    <property type="entry name" value="Peptidase_M17"/>
    <property type="match status" value="1"/>
</dbReference>
<dbReference type="FunFam" id="3.40.220.10:FF:000001">
    <property type="entry name" value="Probable cytosol aminopeptidase"/>
    <property type="match status" value="1"/>
</dbReference>
<dbReference type="FunFam" id="3.40.630.10:FF:000004">
    <property type="entry name" value="Probable cytosol aminopeptidase"/>
    <property type="match status" value="1"/>
</dbReference>
<dbReference type="Gene3D" id="3.40.220.10">
    <property type="entry name" value="Leucine Aminopeptidase, subunit E, domain 1"/>
    <property type="match status" value="1"/>
</dbReference>
<dbReference type="Gene3D" id="3.40.630.10">
    <property type="entry name" value="Zn peptidases"/>
    <property type="match status" value="1"/>
</dbReference>
<dbReference type="HAMAP" id="MF_00181">
    <property type="entry name" value="Cytosol_peptidase_M17"/>
    <property type="match status" value="1"/>
</dbReference>
<dbReference type="InterPro" id="IPR011356">
    <property type="entry name" value="Leucine_aapep/pepB"/>
</dbReference>
<dbReference type="InterPro" id="IPR043472">
    <property type="entry name" value="Macro_dom-like"/>
</dbReference>
<dbReference type="InterPro" id="IPR000819">
    <property type="entry name" value="Peptidase_M17_C"/>
</dbReference>
<dbReference type="InterPro" id="IPR023042">
    <property type="entry name" value="Peptidase_M17_leu_NH2_pept"/>
</dbReference>
<dbReference type="InterPro" id="IPR008283">
    <property type="entry name" value="Peptidase_M17_N"/>
</dbReference>
<dbReference type="NCBIfam" id="NF002072">
    <property type="entry name" value="PRK00913.1-1"/>
    <property type="match status" value="1"/>
</dbReference>
<dbReference type="NCBIfam" id="NF002074">
    <property type="entry name" value="PRK00913.1-4"/>
    <property type="match status" value="1"/>
</dbReference>
<dbReference type="PANTHER" id="PTHR11963:SF23">
    <property type="entry name" value="CYTOSOL AMINOPEPTIDASE"/>
    <property type="match status" value="1"/>
</dbReference>
<dbReference type="PANTHER" id="PTHR11963">
    <property type="entry name" value="LEUCINE AMINOPEPTIDASE-RELATED"/>
    <property type="match status" value="1"/>
</dbReference>
<dbReference type="Pfam" id="PF00883">
    <property type="entry name" value="Peptidase_M17"/>
    <property type="match status" value="1"/>
</dbReference>
<dbReference type="Pfam" id="PF02789">
    <property type="entry name" value="Peptidase_M17_N"/>
    <property type="match status" value="1"/>
</dbReference>
<dbReference type="PRINTS" id="PR00481">
    <property type="entry name" value="LAMNOPPTDASE"/>
</dbReference>
<dbReference type="SUPFAM" id="SSF52949">
    <property type="entry name" value="Macro domain-like"/>
    <property type="match status" value="1"/>
</dbReference>
<dbReference type="SUPFAM" id="SSF53187">
    <property type="entry name" value="Zn-dependent exopeptidases"/>
    <property type="match status" value="1"/>
</dbReference>
<dbReference type="PROSITE" id="PS00631">
    <property type="entry name" value="CYTOSOL_AP"/>
    <property type="match status" value="1"/>
</dbReference>
<name>AMPA_YERPY</name>
<feature type="chain" id="PRO_1000098366" description="Probable cytosol aminopeptidase">
    <location>
        <begin position="1"/>
        <end position="503"/>
    </location>
</feature>
<feature type="active site" evidence="1">
    <location>
        <position position="282"/>
    </location>
</feature>
<feature type="active site" evidence="1">
    <location>
        <position position="356"/>
    </location>
</feature>
<feature type="binding site" evidence="1">
    <location>
        <position position="270"/>
    </location>
    <ligand>
        <name>Mn(2+)</name>
        <dbReference type="ChEBI" id="CHEBI:29035"/>
        <label>2</label>
    </ligand>
</feature>
<feature type="binding site" evidence="1">
    <location>
        <position position="275"/>
    </location>
    <ligand>
        <name>Mn(2+)</name>
        <dbReference type="ChEBI" id="CHEBI:29035"/>
        <label>1</label>
    </ligand>
</feature>
<feature type="binding site" evidence="1">
    <location>
        <position position="275"/>
    </location>
    <ligand>
        <name>Mn(2+)</name>
        <dbReference type="ChEBI" id="CHEBI:29035"/>
        <label>2</label>
    </ligand>
</feature>
<feature type="binding site" evidence="1">
    <location>
        <position position="293"/>
    </location>
    <ligand>
        <name>Mn(2+)</name>
        <dbReference type="ChEBI" id="CHEBI:29035"/>
        <label>2</label>
    </ligand>
</feature>
<feature type="binding site" evidence="1">
    <location>
        <position position="352"/>
    </location>
    <ligand>
        <name>Mn(2+)</name>
        <dbReference type="ChEBI" id="CHEBI:29035"/>
        <label>1</label>
    </ligand>
</feature>
<feature type="binding site" evidence="1">
    <location>
        <position position="354"/>
    </location>
    <ligand>
        <name>Mn(2+)</name>
        <dbReference type="ChEBI" id="CHEBI:29035"/>
        <label>1</label>
    </ligand>
</feature>
<feature type="binding site" evidence="1">
    <location>
        <position position="354"/>
    </location>
    <ligand>
        <name>Mn(2+)</name>
        <dbReference type="ChEBI" id="CHEBI:29035"/>
        <label>2</label>
    </ligand>
</feature>
<organism>
    <name type="scientific">Yersinia pseudotuberculosis serotype O:3 (strain YPIII)</name>
    <dbReference type="NCBI Taxonomy" id="502800"/>
    <lineage>
        <taxon>Bacteria</taxon>
        <taxon>Pseudomonadati</taxon>
        <taxon>Pseudomonadota</taxon>
        <taxon>Gammaproteobacteria</taxon>
        <taxon>Enterobacterales</taxon>
        <taxon>Yersiniaceae</taxon>
        <taxon>Yersinia</taxon>
    </lineage>
</organism>
<keyword id="KW-0031">Aminopeptidase</keyword>
<keyword id="KW-0963">Cytoplasm</keyword>
<keyword id="KW-0378">Hydrolase</keyword>
<keyword id="KW-0464">Manganese</keyword>
<keyword id="KW-0479">Metal-binding</keyword>
<keyword id="KW-0645">Protease</keyword>
<protein>
    <recommendedName>
        <fullName evidence="1">Probable cytosol aminopeptidase</fullName>
        <ecNumber evidence="1">3.4.11.1</ecNumber>
    </recommendedName>
    <alternativeName>
        <fullName evidence="1">Leucine aminopeptidase</fullName>
        <shortName evidence="1">LAP</shortName>
        <ecNumber evidence="1">3.4.11.10</ecNumber>
    </alternativeName>
    <alternativeName>
        <fullName evidence="1">Leucyl aminopeptidase</fullName>
    </alternativeName>
</protein>
<accession>B1JLS9</accession>
<reference key="1">
    <citation type="submission" date="2008-02" db="EMBL/GenBank/DDBJ databases">
        <title>Complete sequence of Yersinia pseudotuberculosis YPIII.</title>
        <authorList>
            <consortium name="US DOE Joint Genome Institute"/>
            <person name="Copeland A."/>
            <person name="Lucas S."/>
            <person name="Lapidus A."/>
            <person name="Glavina del Rio T."/>
            <person name="Dalin E."/>
            <person name="Tice H."/>
            <person name="Bruce D."/>
            <person name="Goodwin L."/>
            <person name="Pitluck S."/>
            <person name="Munk A.C."/>
            <person name="Brettin T."/>
            <person name="Detter J.C."/>
            <person name="Han C."/>
            <person name="Tapia R."/>
            <person name="Schmutz J."/>
            <person name="Larimer F."/>
            <person name="Land M."/>
            <person name="Hauser L."/>
            <person name="Challacombe J.F."/>
            <person name="Green L."/>
            <person name="Lindler L.E."/>
            <person name="Nikolich M.P."/>
            <person name="Richardson P."/>
        </authorList>
    </citation>
    <scope>NUCLEOTIDE SEQUENCE [LARGE SCALE GENOMIC DNA]</scope>
    <source>
        <strain>YPIII</strain>
    </source>
</reference>
<comment type="function">
    <text evidence="1">Presumably involved in the processing and regular turnover of intracellular proteins. Catalyzes the removal of unsubstituted N-terminal amino acids from various peptides.</text>
</comment>
<comment type="catalytic activity">
    <reaction evidence="1">
        <text>Release of an N-terminal amino acid, Xaa-|-Yaa-, in which Xaa is preferably Leu, but may be other amino acids including Pro although not Arg or Lys, and Yaa may be Pro. Amino acid amides and methyl esters are also readily hydrolyzed, but rates on arylamides are exceedingly low.</text>
        <dbReference type="EC" id="3.4.11.1"/>
    </reaction>
</comment>
<comment type="catalytic activity">
    <reaction evidence="1">
        <text>Release of an N-terminal amino acid, preferentially leucine, but not glutamic or aspartic acids.</text>
        <dbReference type="EC" id="3.4.11.10"/>
    </reaction>
</comment>
<comment type="cofactor">
    <cofactor evidence="1">
        <name>Mn(2+)</name>
        <dbReference type="ChEBI" id="CHEBI:29035"/>
    </cofactor>
    <text evidence="1">Binds 2 manganese ions per subunit.</text>
</comment>
<comment type="subcellular location">
    <subcellularLocation>
        <location evidence="1">Cytoplasm</location>
    </subcellularLocation>
</comment>
<comment type="similarity">
    <text evidence="1">Belongs to the peptidase M17 family.</text>
</comment>